<protein>
    <recommendedName>
        <fullName>Bifunctional protein FolKE</fullName>
    </recommendedName>
    <domain>
        <recommendedName>
            <fullName>2-amino-4-hydroxy-6-hydroxymethyldihydropteridine pyrophosphokinase</fullName>
            <ecNumber>2.7.6.3</ecNumber>
        </recommendedName>
        <alternativeName>
            <fullName>6-hydroxymethyl-7,8-dihydropterin pyrophosphokinase</fullName>
            <shortName>PPPK</shortName>
        </alternativeName>
        <alternativeName>
            <fullName>7,8 dihydro-6-hydroxymethylpterin-pyrophosphokinase</fullName>
            <shortName>HPPK</shortName>
        </alternativeName>
    </domain>
    <domain>
        <recommendedName>
            <fullName>GTP cyclohydrolase 1</fullName>
            <ecNumber>3.5.4.16</ecNumber>
        </recommendedName>
        <alternativeName>
            <fullName>GTP cyclohydrolase I</fullName>
            <shortName>GTP-CH-I</shortName>
        </alternativeName>
    </domain>
</protein>
<name>FOLKE_LACLA</name>
<proteinExistence type="inferred from homology"/>
<evidence type="ECO:0000250" key="1"/>
<evidence type="ECO:0000305" key="2"/>
<accession>Q9CGE3</accession>
<keyword id="KW-0067">ATP-binding</keyword>
<keyword id="KW-0289">Folate biosynthesis</keyword>
<keyword id="KW-0342">GTP-binding</keyword>
<keyword id="KW-0378">Hydrolase</keyword>
<keyword id="KW-0418">Kinase</keyword>
<keyword id="KW-0511">Multifunctional enzyme</keyword>
<keyword id="KW-0547">Nucleotide-binding</keyword>
<keyword id="KW-0554">One-carbon metabolism</keyword>
<keyword id="KW-1185">Reference proteome</keyword>
<keyword id="KW-0808">Transferase</keyword>
<dbReference type="EC" id="2.7.6.3"/>
<dbReference type="EC" id="3.5.4.16"/>
<dbReference type="EMBL" id="AE005176">
    <property type="protein sequence ID" value="AAK05252.1"/>
    <property type="molecule type" value="Genomic_DNA"/>
</dbReference>
<dbReference type="PIR" id="B86769">
    <property type="entry name" value="B86769"/>
</dbReference>
<dbReference type="RefSeq" id="NP_267310.1">
    <property type="nucleotide sequence ID" value="NC_002662.1"/>
</dbReference>
<dbReference type="SMR" id="Q9CGE3"/>
<dbReference type="PaxDb" id="272623-L0175"/>
<dbReference type="EnsemblBacteria" id="AAK05252">
    <property type="protein sequence ID" value="AAK05252"/>
    <property type="gene ID" value="L0175"/>
</dbReference>
<dbReference type="KEGG" id="lla:L0175"/>
<dbReference type="PATRIC" id="fig|272623.7.peg.1234"/>
<dbReference type="eggNOG" id="COG0302">
    <property type="taxonomic scope" value="Bacteria"/>
</dbReference>
<dbReference type="eggNOG" id="COG0801">
    <property type="taxonomic scope" value="Bacteria"/>
</dbReference>
<dbReference type="HOGENOM" id="CLU_775655_0_0_9"/>
<dbReference type="OrthoDB" id="9801207at2"/>
<dbReference type="UniPathway" id="UPA00077">
    <property type="reaction ID" value="UER00155"/>
</dbReference>
<dbReference type="UniPathway" id="UPA00848">
    <property type="reaction ID" value="UER00151"/>
</dbReference>
<dbReference type="Proteomes" id="UP000002196">
    <property type="component" value="Chromosome"/>
</dbReference>
<dbReference type="GO" id="GO:0005737">
    <property type="term" value="C:cytoplasm"/>
    <property type="evidence" value="ECO:0007669"/>
    <property type="project" value="TreeGrafter"/>
</dbReference>
<dbReference type="GO" id="GO:0003848">
    <property type="term" value="F:2-amino-4-hydroxy-6-hydroxymethyldihydropteridine diphosphokinase activity"/>
    <property type="evidence" value="ECO:0007669"/>
    <property type="project" value="UniProtKB-EC"/>
</dbReference>
<dbReference type="GO" id="GO:0005524">
    <property type="term" value="F:ATP binding"/>
    <property type="evidence" value="ECO:0007669"/>
    <property type="project" value="UniProtKB-KW"/>
</dbReference>
<dbReference type="GO" id="GO:0005525">
    <property type="term" value="F:GTP binding"/>
    <property type="evidence" value="ECO:0007669"/>
    <property type="project" value="UniProtKB-KW"/>
</dbReference>
<dbReference type="GO" id="GO:0003934">
    <property type="term" value="F:GTP cyclohydrolase I activity"/>
    <property type="evidence" value="ECO:0007669"/>
    <property type="project" value="UniProtKB-UniRule"/>
</dbReference>
<dbReference type="GO" id="GO:0016301">
    <property type="term" value="F:kinase activity"/>
    <property type="evidence" value="ECO:0007669"/>
    <property type="project" value="UniProtKB-KW"/>
</dbReference>
<dbReference type="GO" id="GO:0008270">
    <property type="term" value="F:zinc ion binding"/>
    <property type="evidence" value="ECO:0007669"/>
    <property type="project" value="UniProtKB-UniRule"/>
</dbReference>
<dbReference type="GO" id="GO:0046656">
    <property type="term" value="P:folic acid biosynthetic process"/>
    <property type="evidence" value="ECO:0007669"/>
    <property type="project" value="UniProtKB-KW"/>
</dbReference>
<dbReference type="GO" id="GO:0006730">
    <property type="term" value="P:one-carbon metabolic process"/>
    <property type="evidence" value="ECO:0007669"/>
    <property type="project" value="UniProtKB-UniRule"/>
</dbReference>
<dbReference type="GO" id="GO:0006729">
    <property type="term" value="P:tetrahydrobiopterin biosynthetic process"/>
    <property type="evidence" value="ECO:0007669"/>
    <property type="project" value="TreeGrafter"/>
</dbReference>
<dbReference type="GO" id="GO:0046654">
    <property type="term" value="P:tetrahydrofolate biosynthetic process"/>
    <property type="evidence" value="ECO:0007669"/>
    <property type="project" value="UniProtKB-UniRule"/>
</dbReference>
<dbReference type="CDD" id="cd00483">
    <property type="entry name" value="HPPK"/>
    <property type="match status" value="1"/>
</dbReference>
<dbReference type="FunFam" id="1.10.286.10:FF:000001">
    <property type="entry name" value="GTP cyclohydrolase 1"/>
    <property type="match status" value="1"/>
</dbReference>
<dbReference type="FunFam" id="3.30.1130.10:FF:000001">
    <property type="entry name" value="GTP cyclohydrolase 1"/>
    <property type="match status" value="1"/>
</dbReference>
<dbReference type="Gene3D" id="1.10.286.10">
    <property type="match status" value="1"/>
</dbReference>
<dbReference type="Gene3D" id="3.30.1130.10">
    <property type="match status" value="1"/>
</dbReference>
<dbReference type="Gene3D" id="3.30.70.560">
    <property type="entry name" value="7,8-Dihydro-6-hydroxymethylpterin-pyrophosphokinase HPPK"/>
    <property type="match status" value="1"/>
</dbReference>
<dbReference type="HAMAP" id="MF_00223">
    <property type="entry name" value="FolE"/>
    <property type="match status" value="1"/>
</dbReference>
<dbReference type="InterPro" id="IPR043133">
    <property type="entry name" value="GTP-CH-I_C/QueF"/>
</dbReference>
<dbReference type="InterPro" id="IPR043134">
    <property type="entry name" value="GTP-CH-I_N"/>
</dbReference>
<dbReference type="InterPro" id="IPR001474">
    <property type="entry name" value="GTP_CycHdrlase_I"/>
</dbReference>
<dbReference type="InterPro" id="IPR018234">
    <property type="entry name" value="GTP_CycHdrlase_I_CS"/>
</dbReference>
<dbReference type="InterPro" id="IPR020602">
    <property type="entry name" value="GTP_CycHdrlase_I_dom"/>
</dbReference>
<dbReference type="InterPro" id="IPR000550">
    <property type="entry name" value="Hppk"/>
</dbReference>
<dbReference type="InterPro" id="IPR035907">
    <property type="entry name" value="Hppk_sf"/>
</dbReference>
<dbReference type="NCBIfam" id="TIGR00063">
    <property type="entry name" value="folE"/>
    <property type="match status" value="1"/>
</dbReference>
<dbReference type="NCBIfam" id="TIGR01498">
    <property type="entry name" value="folK"/>
    <property type="match status" value="1"/>
</dbReference>
<dbReference type="NCBIfam" id="NF006825">
    <property type="entry name" value="PRK09347.1-2"/>
    <property type="match status" value="1"/>
</dbReference>
<dbReference type="NCBIfam" id="NF006826">
    <property type="entry name" value="PRK09347.1-3"/>
    <property type="match status" value="1"/>
</dbReference>
<dbReference type="PANTHER" id="PTHR11109:SF7">
    <property type="entry name" value="GTP CYCLOHYDROLASE 1"/>
    <property type="match status" value="1"/>
</dbReference>
<dbReference type="PANTHER" id="PTHR11109">
    <property type="entry name" value="GTP CYCLOHYDROLASE I"/>
    <property type="match status" value="1"/>
</dbReference>
<dbReference type="Pfam" id="PF01227">
    <property type="entry name" value="GTP_cyclohydroI"/>
    <property type="match status" value="1"/>
</dbReference>
<dbReference type="Pfam" id="PF01288">
    <property type="entry name" value="HPPK"/>
    <property type="match status" value="1"/>
</dbReference>
<dbReference type="SUPFAM" id="SSF55083">
    <property type="entry name" value="6-hydroxymethyl-7,8-dihydropterin pyrophosphokinase, HPPK"/>
    <property type="match status" value="1"/>
</dbReference>
<dbReference type="SUPFAM" id="SSF55620">
    <property type="entry name" value="Tetrahydrobiopterin biosynthesis enzymes-like"/>
    <property type="match status" value="1"/>
</dbReference>
<dbReference type="PROSITE" id="PS00859">
    <property type="entry name" value="GTP_CYCLOHYDROL_1_1"/>
    <property type="match status" value="1"/>
</dbReference>
<dbReference type="PROSITE" id="PS00794">
    <property type="entry name" value="HPPK"/>
    <property type="match status" value="1"/>
</dbReference>
<comment type="catalytic activity">
    <reaction>
        <text>6-hydroxymethyl-7,8-dihydropterin + ATP = (7,8-dihydropterin-6-yl)methyl diphosphate + AMP + H(+)</text>
        <dbReference type="Rhea" id="RHEA:11412"/>
        <dbReference type="ChEBI" id="CHEBI:15378"/>
        <dbReference type="ChEBI" id="CHEBI:30616"/>
        <dbReference type="ChEBI" id="CHEBI:44841"/>
        <dbReference type="ChEBI" id="CHEBI:72950"/>
        <dbReference type="ChEBI" id="CHEBI:456215"/>
        <dbReference type="EC" id="2.7.6.3"/>
    </reaction>
</comment>
<comment type="catalytic activity">
    <reaction>
        <text>GTP + H2O = 7,8-dihydroneopterin 3'-triphosphate + formate + H(+)</text>
        <dbReference type="Rhea" id="RHEA:17473"/>
        <dbReference type="ChEBI" id="CHEBI:15377"/>
        <dbReference type="ChEBI" id="CHEBI:15378"/>
        <dbReference type="ChEBI" id="CHEBI:15740"/>
        <dbReference type="ChEBI" id="CHEBI:37565"/>
        <dbReference type="ChEBI" id="CHEBI:58462"/>
        <dbReference type="EC" id="3.5.4.16"/>
    </reaction>
</comment>
<comment type="pathway">
    <text>Cofactor biosynthesis; 7,8-dihydroneopterin triphosphate biosynthesis; 7,8-dihydroneopterin triphosphate from GTP: step 1/1.</text>
</comment>
<comment type="pathway">
    <text>Cofactor biosynthesis; tetrahydrofolate biosynthesis; 2-amino-4-hydroxy-6-hydroxymethyl-7,8-dihydropteridine diphosphate from 7,8-dihydroneopterin triphosphate: step 4/4.</text>
</comment>
<comment type="subunit">
    <text evidence="1">Homomer.</text>
</comment>
<comment type="similarity">
    <text evidence="2">In the N-terminal section; belongs to the HPPK family.</text>
</comment>
<comment type="similarity">
    <text evidence="2">In the C-terminal section; belongs to the GTP cyclohydrolase I family.</text>
</comment>
<organism>
    <name type="scientific">Lactococcus lactis subsp. lactis (strain IL1403)</name>
    <name type="common">Streptococcus lactis</name>
    <dbReference type="NCBI Taxonomy" id="272623"/>
    <lineage>
        <taxon>Bacteria</taxon>
        <taxon>Bacillati</taxon>
        <taxon>Bacillota</taxon>
        <taxon>Bacilli</taxon>
        <taxon>Lactobacillales</taxon>
        <taxon>Streptococcaceae</taxon>
        <taxon>Lactococcus</taxon>
    </lineage>
</organism>
<reference key="1">
    <citation type="journal article" date="2001" name="Genome Res.">
        <title>The complete genome sequence of the lactic acid bacterium Lactococcus lactis ssp. lactis IL1403.</title>
        <authorList>
            <person name="Bolotin A."/>
            <person name="Wincker P."/>
            <person name="Mauger S."/>
            <person name="Jaillon O."/>
            <person name="Malarme K."/>
            <person name="Weissenbach J."/>
            <person name="Ehrlich S.D."/>
            <person name="Sorokin A."/>
        </authorList>
    </citation>
    <scope>NUCLEOTIDE SEQUENCE [LARGE SCALE GENOMIC DNA]</scope>
    <source>
        <strain>IL1403</strain>
    </source>
</reference>
<feature type="chain" id="PRO_0000119471" description="Bifunctional protein FolKE">
    <location>
        <begin position="1"/>
        <end position="349"/>
    </location>
</feature>
<feature type="region of interest" description="2-amino-4-hydroxy-6-hydroxymethyldihydropteridine pyrophosphokinase">
    <location>
        <begin position="1"/>
        <end position="226"/>
    </location>
</feature>
<feature type="region of interest" description="GTP cyclohydrolase 1">
    <location>
        <begin position="226"/>
        <end position="349"/>
    </location>
</feature>
<gene>
    <name type="primary">folKE</name>
    <name type="ordered locus">LL1154</name>
    <name type="ORF">L0175</name>
</gene>
<sequence>MQTTYLSMGSNIGDRQYYLHEAIRLLGKHPKIMIEKVSNFYESTPVGGVKQDDFTNLALKVATLLEPLELLSFIHEVELSLNRERKIHWGPRTIDIDIIFYDDLEMQVENLVIPHKEAFNRLFVLKPIFELIDKDFKYYASIEKAIAELSVSEQELHVIKEEKTPRNRIEDAVKEILFAVGENPNREGLLETPARVAKMYEEILSSQRLSKFNEYKLFEIDSSKTDSIVLIKDIPFYSMCEHHMLPFFGKAHVAYIPADGKIIGLSKIPRLVDYVSRKLSVQENITHDIGDILTDILNPKGVAVLVEGRHMCVEMRGVKKVNSITKTSYFLGEFKENNEKRMEFLESLL</sequence>